<reference key="1">
    <citation type="journal article" date="1997" name="Nature">
        <title>The complete genome sequence of the gastric pathogen Helicobacter pylori.</title>
        <authorList>
            <person name="Tomb J.-F."/>
            <person name="White O."/>
            <person name="Kerlavage A.R."/>
            <person name="Clayton R.A."/>
            <person name="Sutton G.G."/>
            <person name="Fleischmann R.D."/>
            <person name="Ketchum K.A."/>
            <person name="Klenk H.-P."/>
            <person name="Gill S.R."/>
            <person name="Dougherty B.A."/>
            <person name="Nelson K.E."/>
            <person name="Quackenbush J."/>
            <person name="Zhou L."/>
            <person name="Kirkness E.F."/>
            <person name="Peterson S.N."/>
            <person name="Loftus B.J."/>
            <person name="Richardson D.L."/>
            <person name="Dodson R.J."/>
            <person name="Khalak H.G."/>
            <person name="Glodek A."/>
            <person name="McKenney K."/>
            <person name="FitzGerald L.M."/>
            <person name="Lee N."/>
            <person name="Adams M.D."/>
            <person name="Hickey E.K."/>
            <person name="Berg D.E."/>
            <person name="Gocayne J.D."/>
            <person name="Utterback T.R."/>
            <person name="Peterson J.D."/>
            <person name="Kelley J.M."/>
            <person name="Cotton M.D."/>
            <person name="Weidman J.F."/>
            <person name="Fujii C."/>
            <person name="Bowman C."/>
            <person name="Watthey L."/>
            <person name="Wallin E."/>
            <person name="Hayes W.S."/>
            <person name="Borodovsky M."/>
            <person name="Karp P.D."/>
            <person name="Smith H.O."/>
            <person name="Fraser C.M."/>
            <person name="Venter J.C."/>
        </authorList>
    </citation>
    <scope>NUCLEOTIDE SEQUENCE [LARGE SCALE GENOMIC DNA]</scope>
    <source>
        <strain>ATCC 700392 / 26695</strain>
    </source>
</reference>
<reference key="2">
    <citation type="journal article" date="2005" name="J. Bacteriol.">
        <title>Structural and functional divergence of MutS2 from bacterial MutS1 and eukaryotic MSH4-MSH5 homologs.</title>
        <authorList>
            <person name="Kang J."/>
            <person name="Huang S."/>
            <person name="Blaser M.J."/>
        </authorList>
    </citation>
    <scope>FUNCTION</scope>
    <scope>DISRUPTION PHENOTYPE</scope>
    <source>
        <strain>JP26</strain>
    </source>
</reference>
<reference key="3">
    <citation type="journal article" date="2005" name="Mol. Cell">
        <title>Suppression of homologous and homeologous recombination by the bacterial MutS2 protein.</title>
        <authorList>
            <person name="Pinto A.V."/>
            <person name="Mathieu A."/>
            <person name="Marsin S."/>
            <person name="Veaute X."/>
            <person name="Ielpi L."/>
            <person name="Labigne A."/>
            <person name="Radicella J.P."/>
        </authorList>
    </citation>
    <scope>FUNCTION</scope>
    <scope>ATPASE ACTIVITY</scope>
    <scope>DNA-BINDING</scope>
    <scope>ACTIVITY REGULATION</scope>
    <scope>DISRUPTION PHENOTYPE</scope>
    <scope>MUTAGENESIS OF GLY-338</scope>
</reference>
<reference key="4">
    <citation type="journal article" date="2005" name="Mol. Microbiol.">
        <title>The Helicobacter pylori MutS protein confers protection from oxidative DNA damage.</title>
        <authorList>
            <person name="Wang G."/>
            <person name="Alamuri P."/>
            <person name="Humayun M.Z."/>
            <person name="Taylor D.E."/>
            <person name="Maier R.J."/>
        </authorList>
    </citation>
    <scope>FUNCTION IN DNA DAMAGE REPAIR</scope>
    <scope>DNA-BINDING</scope>
    <scope>DISRUPTION PHENOTYPE</scope>
    <source>
        <strain>ATCC 700392 / 26695</strain>
        <strain>SS1</strain>
    </source>
</reference>
<proteinExistence type="evidence at protein level"/>
<name>MUTS2_HELPY</name>
<feature type="chain" id="PRO_0000115222" description="Endonuclease MutS2">
    <location>
        <begin position="1"/>
        <end position="762"/>
    </location>
</feature>
<feature type="domain" description="Smr" evidence="1">
    <location>
        <begin position="688"/>
        <end position="762"/>
    </location>
</feature>
<feature type="region of interest" description="Disordered" evidence="2">
    <location>
        <begin position="1"/>
        <end position="22"/>
    </location>
</feature>
<feature type="compositionally biased region" description="Low complexity" evidence="2">
    <location>
        <begin position="9"/>
        <end position="20"/>
    </location>
</feature>
<feature type="binding site" evidence="1">
    <location>
        <begin position="333"/>
        <end position="340"/>
    </location>
    <ligand>
        <name>ATP</name>
        <dbReference type="ChEBI" id="CHEBI:30616"/>
    </ligand>
</feature>
<feature type="mutagenesis site" description="Lack of ATPase activity." evidence="3">
    <original>G</original>
    <variation>R</variation>
    <location>
        <position position="338"/>
    </location>
</feature>
<organism>
    <name type="scientific">Helicobacter pylori (strain ATCC 700392 / 26695)</name>
    <name type="common">Campylobacter pylori</name>
    <dbReference type="NCBI Taxonomy" id="85962"/>
    <lineage>
        <taxon>Bacteria</taxon>
        <taxon>Pseudomonadati</taxon>
        <taxon>Campylobacterota</taxon>
        <taxon>Epsilonproteobacteria</taxon>
        <taxon>Campylobacterales</taxon>
        <taxon>Helicobacteraceae</taxon>
        <taxon>Helicobacter</taxon>
    </lineage>
</organism>
<protein>
    <recommendedName>
        <fullName evidence="1">Endonuclease MutS2</fullName>
        <ecNumber evidence="1">3.1.-.-</ecNumber>
    </recommendedName>
    <alternativeName>
        <fullName evidence="1">Ribosome-associated protein quality control-upstream factor</fullName>
        <shortName evidence="1">RQC-upstream factor</shortName>
        <shortName evidence="1">RqcU</shortName>
        <ecNumber evidence="1 3">3.6.4.-</ecNumber>
    </alternativeName>
</protein>
<sequence length="762" mass="86753">MSDAPKRSLNPTLMMNNNNTPPKPLEESLDLKEFIALFKTFFAKERDTIALENDLKQTFTYLNEVDAIGLPTPKSVKESDLIIIKLTKLGTLHLDEIFEIVKRLHYIVVLQNAFKTFTHLKFHERLNAIVLPPFFNDLIALFDDEGKIKQGANATLDALNESLNRLKKESVKIIHHYARSKELAPYLVDTQSHLKHGYECLLLKSGFSGAIKGVVLERSANGYFYLLPESAQKIAQKIAQIGNEIDCCIVEMCQTLSHSLQKHLLFLKFLFKEFDFLDSLQARLNFAKAYNLEFVMPSFTQKKMILENFSHPILKEPKPLNLKFEKSMLAVTGVNAGGKTMLLKSLLSAAFLSKHLIPMKINAHHSIIPYFKEIHAIINDPQNSANNISTFAGRMKQFSALLSKENMLLGVDEIELGTDADEASSLYKTLLEKLLKQNNQIIITTHHKRLSVLMAENKEVELLAALYDEEKERPTYTFLKGVIGKSYAFETALRYGVPHFLIEKAKTFYGEDKEKLNVLIENSSALERELKQKNEHLENALKEQEYLKNAWLLEMEKQKEIFHNKKLELEKSYQQALNILKSEVASKDTSSMHKEIHKASEILSKHKTNQEIPQIITNFQANEKARYKNESVLIVQILDKGYYWIETELGMRLKAHGSLLKKIQKPPKNKFKPPKTTIPKPKEASLRLDLRGQRSEEALDLLDAFLNDALLGGFEEVLICHGKGSGILEKFVKEFLKNHPKVVSFSDAPINLGGSGVKIVKL</sequence>
<comment type="function">
    <text evidence="1 3 4 5 7">Endonuclease that is involved in the suppression of homologous recombination and may thus have a key role in the control of bacterial genetic diversity (Probable). Also involved in repairing oxidative DNA damage (PubMed:16164556). Has ATPase activity (PubMed:15629722). Binds DNA.</text>
</comment>
<comment type="function">
    <text>Endonuclease that is involved in the suppression of homologous recombination and thus may have a key role in the control of bacterial genetic diversity.</text>
</comment>
<comment type="function">
    <text evidence="1">Acts as a ribosome collision sensor, splitting the ribosome into its 2 subunits. Detects stalled/collided 70S ribosomes which it binds and splits by an ATP-hydrolysis driven conformational change. Acts upstream of the ribosome quality control system (RQC), a ribosome-associated complex that mediates the extraction of incompletely synthesized nascent chains from stalled ribosomes and their subsequent degradation. Probably generates substrates for RQC.</text>
</comment>
<comment type="activity regulation">
    <text evidence="3">ATPase activity is stimulated by DNA.</text>
</comment>
<comment type="subunit">
    <text evidence="1">Homodimer. Binds to stalled ribosomes, contacting rRNA.</text>
</comment>
<comment type="disruption phenotype">
    <text evidence="3 4 5">Mutants have a significantly increased frequency of intergenomic recombination (PubMed:15866941, PubMed:15629722). They are more sensitive than wild-type cells to oxidative stress induced by agents such as H(2)O(2), paraquat or oxygen (PubMed:16164556). They also have a reduced colonization capacity in a mouse model of infection (PubMed:16164556).</text>
</comment>
<comment type="similarity">
    <text evidence="1">Belongs to the DNA mismatch repair MutS family. MutS2 subfamily.</text>
</comment>
<keyword id="KW-0067">ATP-binding</keyword>
<keyword id="KW-0238">DNA-binding</keyword>
<keyword id="KW-0255">Endonuclease</keyword>
<keyword id="KW-0378">Hydrolase</keyword>
<keyword id="KW-0540">Nuclease</keyword>
<keyword id="KW-0547">Nucleotide-binding</keyword>
<keyword id="KW-1185">Reference proteome</keyword>
<keyword id="KW-0694">RNA-binding</keyword>
<keyword id="KW-0699">rRNA-binding</keyword>
<evidence type="ECO:0000255" key="1">
    <source>
        <dbReference type="HAMAP-Rule" id="MF_00092"/>
    </source>
</evidence>
<evidence type="ECO:0000256" key="2">
    <source>
        <dbReference type="SAM" id="MobiDB-lite"/>
    </source>
</evidence>
<evidence type="ECO:0000269" key="3">
    <source>
    </source>
</evidence>
<evidence type="ECO:0000269" key="4">
    <source>
    </source>
</evidence>
<evidence type="ECO:0000269" key="5">
    <source>
    </source>
</evidence>
<evidence type="ECO:0000303" key="6">
    <source>
    </source>
</evidence>
<evidence type="ECO:0000305" key="7"/>
<gene>
    <name evidence="1 6" type="primary">mutS2</name>
    <name type="synonym">mutSB</name>
    <name evidence="1" type="synonym">rqcU</name>
    <name type="ordered locus">HP_0621</name>
</gene>
<accession>O25338</accession>
<dbReference type="EC" id="3.1.-.-" evidence="1"/>
<dbReference type="EC" id="3.6.4.-" evidence="1 3"/>
<dbReference type="EMBL" id="AE000511">
    <property type="protein sequence ID" value="AAD07685.1"/>
    <property type="molecule type" value="Genomic_DNA"/>
</dbReference>
<dbReference type="PIR" id="E64597">
    <property type="entry name" value="E64597"/>
</dbReference>
<dbReference type="RefSeq" id="NP_207415.1">
    <property type="nucleotide sequence ID" value="NC_000915.1"/>
</dbReference>
<dbReference type="SMR" id="O25338"/>
<dbReference type="DIP" id="DIP-3208N"/>
<dbReference type="IntAct" id="O25338">
    <property type="interactions" value="32"/>
</dbReference>
<dbReference type="MINT" id="O25338"/>
<dbReference type="STRING" id="85962.HP_0621"/>
<dbReference type="PaxDb" id="85962-C694_03215"/>
<dbReference type="EnsemblBacteria" id="AAD07685">
    <property type="protein sequence ID" value="AAD07685"/>
    <property type="gene ID" value="HP_0621"/>
</dbReference>
<dbReference type="KEGG" id="hpy:HP_0621"/>
<dbReference type="PATRIC" id="fig|85962.8.peg.651"/>
<dbReference type="eggNOG" id="COG1193">
    <property type="taxonomic scope" value="Bacteria"/>
</dbReference>
<dbReference type="InParanoid" id="O25338"/>
<dbReference type="OrthoDB" id="9808166at2"/>
<dbReference type="PhylomeDB" id="O25338"/>
<dbReference type="Proteomes" id="UP000000429">
    <property type="component" value="Chromosome"/>
</dbReference>
<dbReference type="GO" id="GO:0005524">
    <property type="term" value="F:ATP binding"/>
    <property type="evidence" value="ECO:0007669"/>
    <property type="project" value="UniProtKB-UniRule"/>
</dbReference>
<dbReference type="GO" id="GO:0016887">
    <property type="term" value="F:ATP hydrolysis activity"/>
    <property type="evidence" value="ECO:0007669"/>
    <property type="project" value="InterPro"/>
</dbReference>
<dbReference type="GO" id="GO:0140664">
    <property type="term" value="F:ATP-dependent DNA damage sensor activity"/>
    <property type="evidence" value="ECO:0007669"/>
    <property type="project" value="InterPro"/>
</dbReference>
<dbReference type="GO" id="GO:0003690">
    <property type="term" value="F:double-stranded DNA binding"/>
    <property type="evidence" value="ECO:0000318"/>
    <property type="project" value="GO_Central"/>
</dbReference>
<dbReference type="GO" id="GO:0004519">
    <property type="term" value="F:endonuclease activity"/>
    <property type="evidence" value="ECO:0007669"/>
    <property type="project" value="UniProtKB-UniRule"/>
</dbReference>
<dbReference type="GO" id="GO:0030983">
    <property type="term" value="F:mismatched DNA binding"/>
    <property type="evidence" value="ECO:0007669"/>
    <property type="project" value="InterPro"/>
</dbReference>
<dbReference type="GO" id="GO:0043023">
    <property type="term" value="F:ribosomal large subunit binding"/>
    <property type="evidence" value="ECO:0007669"/>
    <property type="project" value="UniProtKB-UniRule"/>
</dbReference>
<dbReference type="GO" id="GO:0019843">
    <property type="term" value="F:rRNA binding"/>
    <property type="evidence" value="ECO:0007669"/>
    <property type="project" value="UniProtKB-UniRule"/>
</dbReference>
<dbReference type="GO" id="GO:0006298">
    <property type="term" value="P:mismatch repair"/>
    <property type="evidence" value="ECO:0007669"/>
    <property type="project" value="InterPro"/>
</dbReference>
<dbReference type="GO" id="GO:0045910">
    <property type="term" value="P:negative regulation of DNA recombination"/>
    <property type="evidence" value="ECO:0000315"/>
    <property type="project" value="CACAO"/>
</dbReference>
<dbReference type="GO" id="GO:0072344">
    <property type="term" value="P:rescue of stalled ribosome"/>
    <property type="evidence" value="ECO:0007669"/>
    <property type="project" value="UniProtKB-UniRule"/>
</dbReference>
<dbReference type="FunFam" id="3.30.1370.110:FF:000004">
    <property type="entry name" value="Endonuclease MutS2"/>
    <property type="match status" value="1"/>
</dbReference>
<dbReference type="FunFam" id="3.40.50.300:FF:004231">
    <property type="entry name" value="Endonuclease MutS2"/>
    <property type="match status" value="1"/>
</dbReference>
<dbReference type="Gene3D" id="3.30.1370.110">
    <property type="match status" value="1"/>
</dbReference>
<dbReference type="Gene3D" id="3.40.50.300">
    <property type="entry name" value="P-loop containing nucleotide triphosphate hydrolases"/>
    <property type="match status" value="1"/>
</dbReference>
<dbReference type="HAMAP" id="MF_00092">
    <property type="entry name" value="MutS2"/>
    <property type="match status" value="1"/>
</dbReference>
<dbReference type="InterPro" id="IPR000432">
    <property type="entry name" value="DNA_mismatch_repair_MutS_C"/>
</dbReference>
<dbReference type="InterPro" id="IPR007696">
    <property type="entry name" value="DNA_mismatch_repair_MutS_core"/>
</dbReference>
<dbReference type="InterPro" id="IPR036187">
    <property type="entry name" value="DNA_mismatch_repair_MutS_sf"/>
</dbReference>
<dbReference type="InterPro" id="IPR045076">
    <property type="entry name" value="MutS"/>
</dbReference>
<dbReference type="InterPro" id="IPR005747">
    <property type="entry name" value="MutS2"/>
</dbReference>
<dbReference type="InterPro" id="IPR027417">
    <property type="entry name" value="P-loop_NTPase"/>
</dbReference>
<dbReference type="InterPro" id="IPR002625">
    <property type="entry name" value="Smr_dom"/>
</dbReference>
<dbReference type="InterPro" id="IPR036063">
    <property type="entry name" value="Smr_dom_sf"/>
</dbReference>
<dbReference type="NCBIfam" id="TIGR01069">
    <property type="entry name" value="mutS2"/>
    <property type="match status" value="1"/>
</dbReference>
<dbReference type="PANTHER" id="PTHR48466:SF2">
    <property type="entry name" value="OS10G0509000 PROTEIN"/>
    <property type="match status" value="1"/>
</dbReference>
<dbReference type="PANTHER" id="PTHR48466">
    <property type="entry name" value="OS10G0509000 PROTEIN-RELATED"/>
    <property type="match status" value="1"/>
</dbReference>
<dbReference type="Pfam" id="PF00488">
    <property type="entry name" value="MutS_V"/>
    <property type="match status" value="1"/>
</dbReference>
<dbReference type="Pfam" id="PF01713">
    <property type="entry name" value="Smr"/>
    <property type="match status" value="1"/>
</dbReference>
<dbReference type="PIRSF" id="PIRSF005814">
    <property type="entry name" value="MutS_YshD"/>
    <property type="match status" value="1"/>
</dbReference>
<dbReference type="SMART" id="SM00534">
    <property type="entry name" value="MUTSac"/>
    <property type="match status" value="1"/>
</dbReference>
<dbReference type="SMART" id="SM00533">
    <property type="entry name" value="MUTSd"/>
    <property type="match status" value="1"/>
</dbReference>
<dbReference type="SMART" id="SM00463">
    <property type="entry name" value="SMR"/>
    <property type="match status" value="1"/>
</dbReference>
<dbReference type="SUPFAM" id="SSF48334">
    <property type="entry name" value="DNA repair protein MutS, domain III"/>
    <property type="match status" value="1"/>
</dbReference>
<dbReference type="SUPFAM" id="SSF52540">
    <property type="entry name" value="P-loop containing nucleoside triphosphate hydrolases"/>
    <property type="match status" value="1"/>
</dbReference>
<dbReference type="SUPFAM" id="SSF160443">
    <property type="entry name" value="SMR domain-like"/>
    <property type="match status" value="1"/>
</dbReference>
<dbReference type="PROSITE" id="PS50828">
    <property type="entry name" value="SMR"/>
    <property type="match status" value="1"/>
</dbReference>